<gene>
    <name type="primary">GON7</name>
    <name type="ordered locus">CAALFM_C102310CA</name>
    <name type="ORF">CaO19.11172</name>
    <name type="ORF">CaO19.3688</name>
</gene>
<name>GON7_CANAL</name>
<keyword id="KW-0010">Activator</keyword>
<keyword id="KW-0158">Chromosome</keyword>
<keyword id="KW-0539">Nucleus</keyword>
<keyword id="KW-1185">Reference proteome</keyword>
<keyword id="KW-0779">Telomere</keyword>
<keyword id="KW-0804">Transcription</keyword>
<keyword id="KW-0805">Transcription regulation</keyword>
<keyword id="KW-0819">tRNA processing</keyword>
<feature type="chain" id="PRO_0000278920" description="EKC/KEOPS complex subunit GON7">
    <location>
        <begin position="1"/>
        <end position="121"/>
    </location>
</feature>
<feature type="region of interest" description="Disordered" evidence="2">
    <location>
        <begin position="1"/>
        <end position="37"/>
    </location>
</feature>
<feature type="region of interest" description="Disordered" evidence="2">
    <location>
        <begin position="86"/>
        <end position="121"/>
    </location>
</feature>
<feature type="compositionally biased region" description="Basic and acidic residues" evidence="2">
    <location>
        <begin position="15"/>
        <end position="30"/>
    </location>
</feature>
<feature type="compositionally biased region" description="Basic and acidic residues" evidence="2">
    <location>
        <begin position="100"/>
        <end position="112"/>
    </location>
</feature>
<dbReference type="EMBL" id="CP017623">
    <property type="protein sequence ID" value="AOW25916.1"/>
    <property type="molecule type" value="Genomic_DNA"/>
</dbReference>
<dbReference type="RefSeq" id="XP_713782.1">
    <property type="nucleotide sequence ID" value="XM_708689.1"/>
</dbReference>
<dbReference type="SMR" id="Q59W04"/>
<dbReference type="FunCoup" id="Q59W04">
    <property type="interactions" value="31"/>
</dbReference>
<dbReference type="STRING" id="237561.Q59W04"/>
<dbReference type="EnsemblFungi" id="C1_02310C_A-T">
    <property type="protein sequence ID" value="C1_02310C_A-T-p1"/>
    <property type="gene ID" value="C1_02310C_A"/>
</dbReference>
<dbReference type="GeneID" id="3644570"/>
<dbReference type="KEGG" id="cal:CAALFM_C102310CA"/>
<dbReference type="CGD" id="CAL0000189656">
    <property type="gene designation" value="orf19.11172"/>
</dbReference>
<dbReference type="VEuPathDB" id="FungiDB:C1_02310C_A"/>
<dbReference type="eggNOG" id="ENOG502S429">
    <property type="taxonomic scope" value="Eukaryota"/>
</dbReference>
<dbReference type="HOGENOM" id="CLU_151420_0_0_1"/>
<dbReference type="InParanoid" id="Q59W04"/>
<dbReference type="OMA" id="QDHLNIF"/>
<dbReference type="OrthoDB" id="2288868at2759"/>
<dbReference type="PRO" id="PR:Q59W04"/>
<dbReference type="Proteomes" id="UP000000559">
    <property type="component" value="Chromosome 1"/>
</dbReference>
<dbReference type="GO" id="GO:0000781">
    <property type="term" value="C:chromosome, telomeric region"/>
    <property type="evidence" value="ECO:0007669"/>
    <property type="project" value="UniProtKB-SubCell"/>
</dbReference>
<dbReference type="GO" id="GO:0005634">
    <property type="term" value="C:nucleus"/>
    <property type="evidence" value="ECO:0007669"/>
    <property type="project" value="UniProtKB-SubCell"/>
</dbReference>
<dbReference type="GO" id="GO:0008033">
    <property type="term" value="P:tRNA processing"/>
    <property type="evidence" value="ECO:0007669"/>
    <property type="project" value="UniProtKB-KW"/>
</dbReference>
<dbReference type="InterPro" id="IPR014849">
    <property type="entry name" value="EKC/KEOPS_Gon7"/>
</dbReference>
<dbReference type="Pfam" id="PF08738">
    <property type="entry name" value="Gon7"/>
    <property type="match status" value="1"/>
</dbReference>
<protein>
    <recommendedName>
        <fullName>EKC/KEOPS complex subunit GON7</fullName>
    </recommendedName>
</protein>
<proteinExistence type="inferred from homology"/>
<comment type="function">
    <text evidence="1">Component of the EKC/KEOPS complex that is required for the formation of a threonylcarbamoyl group on adenosine at position 37 (t(6)A37) in tRNAs that read codons beginning with adenine. The complex is probably involved in the transfer of the threonylcarbamoyl moiety of threonylcarbamoyl-AMP (TC-AMP) to the N6 group of A37. GON7 likely plays a supporting role to the catalytic subunit KAE1 in the complex. The EKC/KEOPS complex also promotes both telomere uncapping and telomere elongation. The complex is required for efficient recruitment of transcriptional coactivators (By similarity).</text>
</comment>
<comment type="subunit">
    <text evidence="1">Component of the EKC/KEOPS complex composed of at least BUD32, CGI121, GON7, KAE1 and PCC1; the whole complex dimerizes.</text>
</comment>
<comment type="subcellular location">
    <subcellularLocation>
        <location evidence="1">Nucleus</location>
    </subcellularLocation>
    <subcellularLocation>
        <location evidence="1">Chromosome</location>
        <location evidence="1">Telomere</location>
    </subcellularLocation>
</comment>
<comment type="similarity">
    <text evidence="3">Belongs to the GON7 family.</text>
</comment>
<evidence type="ECO:0000250" key="1"/>
<evidence type="ECO:0000256" key="2">
    <source>
        <dbReference type="SAM" id="MobiDB-lite"/>
    </source>
</evidence>
<evidence type="ECO:0000305" key="3"/>
<reference key="1">
    <citation type="journal article" date="2004" name="Proc. Natl. Acad. Sci. U.S.A.">
        <title>The diploid genome sequence of Candida albicans.</title>
        <authorList>
            <person name="Jones T."/>
            <person name="Federspiel N.A."/>
            <person name="Chibana H."/>
            <person name="Dungan J."/>
            <person name="Kalman S."/>
            <person name="Magee B.B."/>
            <person name="Newport G."/>
            <person name="Thorstenson Y.R."/>
            <person name="Agabian N."/>
            <person name="Magee P.T."/>
            <person name="Davis R.W."/>
            <person name="Scherer S."/>
        </authorList>
    </citation>
    <scope>NUCLEOTIDE SEQUENCE [LARGE SCALE GENOMIC DNA]</scope>
    <source>
        <strain>SC5314 / ATCC MYA-2876</strain>
    </source>
</reference>
<reference key="2">
    <citation type="journal article" date="2007" name="Genome Biol.">
        <title>Assembly of the Candida albicans genome into sixteen supercontigs aligned on the eight chromosomes.</title>
        <authorList>
            <person name="van het Hoog M."/>
            <person name="Rast T.J."/>
            <person name="Martchenko M."/>
            <person name="Grindle S."/>
            <person name="Dignard D."/>
            <person name="Hogues H."/>
            <person name="Cuomo C."/>
            <person name="Berriman M."/>
            <person name="Scherer S."/>
            <person name="Magee B.B."/>
            <person name="Whiteway M."/>
            <person name="Chibana H."/>
            <person name="Nantel A."/>
            <person name="Magee P.T."/>
        </authorList>
    </citation>
    <scope>GENOME REANNOTATION</scope>
    <source>
        <strain>SC5314 / ATCC MYA-2876</strain>
    </source>
</reference>
<reference key="3">
    <citation type="journal article" date="2013" name="Genome Biol.">
        <title>Assembly of a phased diploid Candida albicans genome facilitates allele-specific measurements and provides a simple model for repeat and indel structure.</title>
        <authorList>
            <person name="Muzzey D."/>
            <person name="Schwartz K."/>
            <person name="Weissman J.S."/>
            <person name="Sherlock G."/>
        </authorList>
    </citation>
    <scope>NUCLEOTIDE SEQUENCE [LARGE SCALE GENOMIC DNA]</scope>
    <scope>GENOME REANNOTATION</scope>
    <source>
        <strain>SC5314 / ATCC MYA-2876</strain>
    </source>
</reference>
<sequence length="121" mass="13421">MKLTPTAIYTAPDIDSPKHFHLSKNEDHSTNGKTTQISDIVIKAGGEDRDKPSDHKDTPLGNLRAELTTLQDHLNIFLTERMKLEKLKNGGGGGGGDNNKSNEQDLERRILDEGVEEEEIE</sequence>
<organism>
    <name type="scientific">Candida albicans (strain SC5314 / ATCC MYA-2876)</name>
    <name type="common">Yeast</name>
    <dbReference type="NCBI Taxonomy" id="237561"/>
    <lineage>
        <taxon>Eukaryota</taxon>
        <taxon>Fungi</taxon>
        <taxon>Dikarya</taxon>
        <taxon>Ascomycota</taxon>
        <taxon>Saccharomycotina</taxon>
        <taxon>Pichiomycetes</taxon>
        <taxon>Debaryomycetaceae</taxon>
        <taxon>Candida/Lodderomyces clade</taxon>
        <taxon>Candida</taxon>
    </lineage>
</organism>
<accession>Q59W04</accession>
<accession>A0A1D8PCR7</accession>
<accession>Q59VX0</accession>